<sequence length="131" mass="13435">MGGKSAVRHQLVLDCPREAASSAPALRPLGAAATSRAAPLAPLPAPSPRWGLGCGRVRYPGPHPRRAVEPAAGPLSAPIIAGGHPAEAAAGSAKQQPRHSREVPRPPVPQHPSGNSRSALQEAKTEQTKTP</sequence>
<evidence type="ECO:0000256" key="1">
    <source>
        <dbReference type="SAM" id="MobiDB-lite"/>
    </source>
</evidence>
<evidence type="ECO:0000305" key="2"/>
<protein>
    <recommendedName>
        <fullName>Putative uncharacterized protein encoded by LINC01465</fullName>
    </recommendedName>
</protein>
<proteinExistence type="evidence at transcript level"/>
<keyword id="KW-1185">Reference proteome</keyword>
<organism>
    <name type="scientific">Homo sapiens</name>
    <name type="common">Human</name>
    <dbReference type="NCBI Taxonomy" id="9606"/>
    <lineage>
        <taxon>Eukaryota</taxon>
        <taxon>Metazoa</taxon>
        <taxon>Chordata</taxon>
        <taxon>Craniata</taxon>
        <taxon>Vertebrata</taxon>
        <taxon>Euteleostomi</taxon>
        <taxon>Mammalia</taxon>
        <taxon>Eutheria</taxon>
        <taxon>Euarchontoglires</taxon>
        <taxon>Primates</taxon>
        <taxon>Haplorrhini</taxon>
        <taxon>Catarrhini</taxon>
        <taxon>Hominidae</taxon>
        <taxon>Homo</taxon>
    </lineage>
</organism>
<reference key="1">
    <citation type="journal article" date="2004" name="Nat. Genet.">
        <title>Complete sequencing and characterization of 21,243 full-length human cDNAs.</title>
        <authorList>
            <person name="Ota T."/>
            <person name="Suzuki Y."/>
            <person name="Nishikawa T."/>
            <person name="Otsuki T."/>
            <person name="Sugiyama T."/>
            <person name="Irie R."/>
            <person name="Wakamatsu A."/>
            <person name="Hayashi K."/>
            <person name="Sato H."/>
            <person name="Nagai K."/>
            <person name="Kimura K."/>
            <person name="Makita H."/>
            <person name="Sekine M."/>
            <person name="Obayashi M."/>
            <person name="Nishi T."/>
            <person name="Shibahara T."/>
            <person name="Tanaka T."/>
            <person name="Ishii S."/>
            <person name="Yamamoto J."/>
            <person name="Saito K."/>
            <person name="Kawai Y."/>
            <person name="Isono Y."/>
            <person name="Nakamura Y."/>
            <person name="Nagahari K."/>
            <person name="Murakami K."/>
            <person name="Yasuda T."/>
            <person name="Iwayanagi T."/>
            <person name="Wagatsuma M."/>
            <person name="Shiratori A."/>
            <person name="Sudo H."/>
            <person name="Hosoiri T."/>
            <person name="Kaku Y."/>
            <person name="Kodaira H."/>
            <person name="Kondo H."/>
            <person name="Sugawara M."/>
            <person name="Takahashi M."/>
            <person name="Kanda K."/>
            <person name="Yokoi T."/>
            <person name="Furuya T."/>
            <person name="Kikkawa E."/>
            <person name="Omura Y."/>
            <person name="Abe K."/>
            <person name="Kamihara K."/>
            <person name="Katsuta N."/>
            <person name="Sato K."/>
            <person name="Tanikawa M."/>
            <person name="Yamazaki M."/>
            <person name="Ninomiya K."/>
            <person name="Ishibashi T."/>
            <person name="Yamashita H."/>
            <person name="Murakawa K."/>
            <person name="Fujimori K."/>
            <person name="Tanai H."/>
            <person name="Kimata M."/>
            <person name="Watanabe M."/>
            <person name="Hiraoka S."/>
            <person name="Chiba Y."/>
            <person name="Ishida S."/>
            <person name="Ono Y."/>
            <person name="Takiguchi S."/>
            <person name="Watanabe S."/>
            <person name="Yosida M."/>
            <person name="Hotuta T."/>
            <person name="Kusano J."/>
            <person name="Kanehori K."/>
            <person name="Takahashi-Fujii A."/>
            <person name="Hara H."/>
            <person name="Tanase T.-O."/>
            <person name="Nomura Y."/>
            <person name="Togiya S."/>
            <person name="Komai F."/>
            <person name="Hara R."/>
            <person name="Takeuchi K."/>
            <person name="Arita M."/>
            <person name="Imose N."/>
            <person name="Musashino K."/>
            <person name="Yuuki H."/>
            <person name="Oshima A."/>
            <person name="Sasaki N."/>
            <person name="Aotsuka S."/>
            <person name="Yoshikawa Y."/>
            <person name="Matsunawa H."/>
            <person name="Ichihara T."/>
            <person name="Shiohata N."/>
            <person name="Sano S."/>
            <person name="Moriya S."/>
            <person name="Momiyama H."/>
            <person name="Satoh N."/>
            <person name="Takami S."/>
            <person name="Terashima Y."/>
            <person name="Suzuki O."/>
            <person name="Nakagawa S."/>
            <person name="Senoh A."/>
            <person name="Mizoguchi H."/>
            <person name="Goto Y."/>
            <person name="Shimizu F."/>
            <person name="Wakebe H."/>
            <person name="Hishigaki H."/>
            <person name="Watanabe T."/>
            <person name="Sugiyama A."/>
            <person name="Takemoto M."/>
            <person name="Kawakami B."/>
            <person name="Yamazaki M."/>
            <person name="Watanabe K."/>
            <person name="Kumagai A."/>
            <person name="Itakura S."/>
            <person name="Fukuzumi Y."/>
            <person name="Fujimori Y."/>
            <person name="Komiyama M."/>
            <person name="Tashiro H."/>
            <person name="Tanigami A."/>
            <person name="Fujiwara T."/>
            <person name="Ono T."/>
            <person name="Yamada K."/>
            <person name="Fujii Y."/>
            <person name="Ozaki K."/>
            <person name="Hirao M."/>
            <person name="Ohmori Y."/>
            <person name="Kawabata A."/>
            <person name="Hikiji T."/>
            <person name="Kobatake N."/>
            <person name="Inagaki H."/>
            <person name="Ikema Y."/>
            <person name="Okamoto S."/>
            <person name="Okitani R."/>
            <person name="Kawakami T."/>
            <person name="Noguchi S."/>
            <person name="Itoh T."/>
            <person name="Shigeta K."/>
            <person name="Senba T."/>
            <person name="Matsumura K."/>
            <person name="Nakajima Y."/>
            <person name="Mizuno T."/>
            <person name="Morinaga M."/>
            <person name="Sasaki M."/>
            <person name="Togashi T."/>
            <person name="Oyama M."/>
            <person name="Hata H."/>
            <person name="Watanabe M."/>
            <person name="Komatsu T."/>
            <person name="Mizushima-Sugano J."/>
            <person name="Satoh T."/>
            <person name="Shirai Y."/>
            <person name="Takahashi Y."/>
            <person name="Nakagawa K."/>
            <person name="Okumura K."/>
            <person name="Nagase T."/>
            <person name="Nomura N."/>
            <person name="Kikuchi H."/>
            <person name="Masuho Y."/>
            <person name="Yamashita R."/>
            <person name="Nakai K."/>
            <person name="Yada T."/>
            <person name="Nakamura Y."/>
            <person name="Ohara O."/>
            <person name="Isogai T."/>
            <person name="Sugano S."/>
        </authorList>
    </citation>
    <scope>NUCLEOTIDE SEQUENCE [LARGE SCALE MRNA]</scope>
    <source>
        <tissue>Thyroid</tissue>
    </source>
</reference>
<reference key="2">
    <citation type="journal article" date="2006" name="Nature">
        <title>The finished DNA sequence of human chromosome 12.</title>
        <authorList>
            <person name="Scherer S.E."/>
            <person name="Muzny D.M."/>
            <person name="Buhay C.J."/>
            <person name="Chen R."/>
            <person name="Cree A."/>
            <person name="Ding Y."/>
            <person name="Dugan-Rocha S."/>
            <person name="Gill R."/>
            <person name="Gunaratne P."/>
            <person name="Harris R.A."/>
            <person name="Hawes A.C."/>
            <person name="Hernandez J."/>
            <person name="Hodgson A.V."/>
            <person name="Hume J."/>
            <person name="Jackson A."/>
            <person name="Khan Z.M."/>
            <person name="Kovar-Smith C."/>
            <person name="Lewis L.R."/>
            <person name="Lozado R.J."/>
            <person name="Metzker M.L."/>
            <person name="Milosavljevic A."/>
            <person name="Miner G.R."/>
            <person name="Montgomery K.T."/>
            <person name="Morgan M.B."/>
            <person name="Nazareth L.V."/>
            <person name="Scott G."/>
            <person name="Sodergren E."/>
            <person name="Song X.-Z."/>
            <person name="Steffen D."/>
            <person name="Lovering R.C."/>
            <person name="Wheeler D.A."/>
            <person name="Worley K.C."/>
            <person name="Yuan Y."/>
            <person name="Zhang Z."/>
            <person name="Adams C.Q."/>
            <person name="Ansari-Lari M.A."/>
            <person name="Ayele M."/>
            <person name="Brown M.J."/>
            <person name="Chen G."/>
            <person name="Chen Z."/>
            <person name="Clerc-Blankenburg K.P."/>
            <person name="Davis C."/>
            <person name="Delgado O."/>
            <person name="Dinh H.H."/>
            <person name="Draper H."/>
            <person name="Gonzalez-Garay M.L."/>
            <person name="Havlak P."/>
            <person name="Jackson L.R."/>
            <person name="Jacob L.S."/>
            <person name="Kelly S.H."/>
            <person name="Li L."/>
            <person name="Li Z."/>
            <person name="Liu J."/>
            <person name="Liu W."/>
            <person name="Lu J."/>
            <person name="Maheshwari M."/>
            <person name="Nguyen B.-V."/>
            <person name="Okwuonu G.O."/>
            <person name="Pasternak S."/>
            <person name="Perez L.M."/>
            <person name="Plopper F.J.H."/>
            <person name="Santibanez J."/>
            <person name="Shen H."/>
            <person name="Tabor P.E."/>
            <person name="Verduzco D."/>
            <person name="Waldron L."/>
            <person name="Wang Q."/>
            <person name="Williams G.A."/>
            <person name="Zhang J."/>
            <person name="Zhou J."/>
            <person name="Allen C.C."/>
            <person name="Amin A.G."/>
            <person name="Anyalebechi V."/>
            <person name="Bailey M."/>
            <person name="Barbaria J.A."/>
            <person name="Bimage K.E."/>
            <person name="Bryant N.P."/>
            <person name="Burch P.E."/>
            <person name="Burkett C.E."/>
            <person name="Burrell K.L."/>
            <person name="Calderon E."/>
            <person name="Cardenas V."/>
            <person name="Carter K."/>
            <person name="Casias K."/>
            <person name="Cavazos I."/>
            <person name="Cavazos S.R."/>
            <person name="Ceasar H."/>
            <person name="Chacko J."/>
            <person name="Chan S.N."/>
            <person name="Chavez D."/>
            <person name="Christopoulos C."/>
            <person name="Chu J."/>
            <person name="Cockrell R."/>
            <person name="Cox C.D."/>
            <person name="Dang M."/>
            <person name="Dathorne S.R."/>
            <person name="David R."/>
            <person name="Davis C.M."/>
            <person name="Davy-Carroll L."/>
            <person name="Deshazo D.R."/>
            <person name="Donlin J.E."/>
            <person name="D'Souza L."/>
            <person name="Eaves K.A."/>
            <person name="Egan A."/>
            <person name="Emery-Cohen A.J."/>
            <person name="Escotto M."/>
            <person name="Flagg N."/>
            <person name="Forbes L.D."/>
            <person name="Gabisi A.M."/>
            <person name="Garza M."/>
            <person name="Hamilton C."/>
            <person name="Henderson N."/>
            <person name="Hernandez O."/>
            <person name="Hines S."/>
            <person name="Hogues M.E."/>
            <person name="Huang M."/>
            <person name="Idlebird D.G."/>
            <person name="Johnson R."/>
            <person name="Jolivet A."/>
            <person name="Jones S."/>
            <person name="Kagan R."/>
            <person name="King L.M."/>
            <person name="Leal B."/>
            <person name="Lebow H."/>
            <person name="Lee S."/>
            <person name="LeVan J.M."/>
            <person name="Lewis L.C."/>
            <person name="London P."/>
            <person name="Lorensuhewa L.M."/>
            <person name="Loulseged H."/>
            <person name="Lovett D.A."/>
            <person name="Lucier A."/>
            <person name="Lucier R.L."/>
            <person name="Ma J."/>
            <person name="Madu R.C."/>
            <person name="Mapua P."/>
            <person name="Martindale A.D."/>
            <person name="Martinez E."/>
            <person name="Massey E."/>
            <person name="Mawhiney S."/>
            <person name="Meador M.G."/>
            <person name="Mendez S."/>
            <person name="Mercado C."/>
            <person name="Mercado I.C."/>
            <person name="Merritt C.E."/>
            <person name="Miner Z.L."/>
            <person name="Minja E."/>
            <person name="Mitchell T."/>
            <person name="Mohabbat F."/>
            <person name="Mohabbat K."/>
            <person name="Montgomery B."/>
            <person name="Moore N."/>
            <person name="Morris S."/>
            <person name="Munidasa M."/>
            <person name="Ngo R.N."/>
            <person name="Nguyen N.B."/>
            <person name="Nickerson E."/>
            <person name="Nwaokelemeh O.O."/>
            <person name="Nwokenkwo S."/>
            <person name="Obregon M."/>
            <person name="Oguh M."/>
            <person name="Oragunye N."/>
            <person name="Oviedo R.J."/>
            <person name="Parish B.J."/>
            <person name="Parker D.N."/>
            <person name="Parrish J."/>
            <person name="Parks K.L."/>
            <person name="Paul H.A."/>
            <person name="Payton B.A."/>
            <person name="Perez A."/>
            <person name="Perrin W."/>
            <person name="Pickens A."/>
            <person name="Primus E.L."/>
            <person name="Pu L.-L."/>
            <person name="Puazo M."/>
            <person name="Quiles M.M."/>
            <person name="Quiroz J.B."/>
            <person name="Rabata D."/>
            <person name="Reeves K."/>
            <person name="Ruiz S.J."/>
            <person name="Shao H."/>
            <person name="Sisson I."/>
            <person name="Sonaike T."/>
            <person name="Sorelle R.P."/>
            <person name="Sutton A.E."/>
            <person name="Svatek A.F."/>
            <person name="Svetz L.A."/>
            <person name="Tamerisa K.S."/>
            <person name="Taylor T.R."/>
            <person name="Teague B."/>
            <person name="Thomas N."/>
            <person name="Thorn R.D."/>
            <person name="Trejos Z.Y."/>
            <person name="Trevino B.K."/>
            <person name="Ukegbu O.N."/>
            <person name="Urban J.B."/>
            <person name="Vasquez L.I."/>
            <person name="Vera V.A."/>
            <person name="Villasana D.M."/>
            <person name="Wang L."/>
            <person name="Ward-Moore S."/>
            <person name="Warren J.T."/>
            <person name="Wei X."/>
            <person name="White F."/>
            <person name="Williamson A.L."/>
            <person name="Wleczyk R."/>
            <person name="Wooden H.S."/>
            <person name="Wooden S.H."/>
            <person name="Yen J."/>
            <person name="Yoon L."/>
            <person name="Yoon V."/>
            <person name="Zorrilla S.E."/>
            <person name="Nelson D."/>
            <person name="Kucherlapati R."/>
            <person name="Weinstock G."/>
            <person name="Gibbs R.A."/>
        </authorList>
    </citation>
    <scope>NUCLEOTIDE SEQUENCE [LARGE SCALE GENOMIC DNA]</scope>
</reference>
<reference key="3">
    <citation type="submission" date="2005-07" db="EMBL/GenBank/DDBJ databases">
        <authorList>
            <person name="Mural R.J."/>
            <person name="Istrail S."/>
            <person name="Sutton G.G."/>
            <person name="Florea L."/>
            <person name="Halpern A.L."/>
            <person name="Mobarry C.M."/>
            <person name="Lippert R."/>
            <person name="Walenz B."/>
            <person name="Shatkay H."/>
            <person name="Dew I."/>
            <person name="Miller J.R."/>
            <person name="Flanigan M.J."/>
            <person name="Edwards N.J."/>
            <person name="Bolanos R."/>
            <person name="Fasulo D."/>
            <person name="Halldorsson B.V."/>
            <person name="Hannenhalli S."/>
            <person name="Turner R."/>
            <person name="Yooseph S."/>
            <person name="Lu F."/>
            <person name="Nusskern D.R."/>
            <person name="Shue B.C."/>
            <person name="Zheng X.H."/>
            <person name="Zhong F."/>
            <person name="Delcher A.L."/>
            <person name="Huson D.H."/>
            <person name="Kravitz S.A."/>
            <person name="Mouchard L."/>
            <person name="Reinert K."/>
            <person name="Remington K.A."/>
            <person name="Clark A.G."/>
            <person name="Waterman M.S."/>
            <person name="Eichler E.E."/>
            <person name="Adams M.D."/>
            <person name="Hunkapiller M.W."/>
            <person name="Myers E.W."/>
            <person name="Venter J.C."/>
        </authorList>
    </citation>
    <scope>NUCLEOTIDE SEQUENCE [LARGE SCALE GENOMIC DNA]</scope>
</reference>
<reference key="4">
    <citation type="journal article" date="2004" name="Genome Res.">
        <title>The status, quality, and expansion of the NIH full-length cDNA project: the Mammalian Gene Collection (MGC).</title>
        <authorList>
            <consortium name="The MGC Project Team"/>
        </authorList>
    </citation>
    <scope>NUCLEOTIDE SEQUENCE [LARGE SCALE MRNA]</scope>
    <source>
        <tissue>Brain</tissue>
        <tissue>Testis</tissue>
    </source>
</reference>
<accession>Q8N7H1</accession>
<accession>B2RMN9</accession>
<accession>Q3ZCV4</accession>
<feature type="chain" id="PRO_0000284615" description="Putative uncharacterized protein encoded by LINC01465">
    <location>
        <begin position="1"/>
        <end position="131"/>
    </location>
</feature>
<feature type="region of interest" description="Disordered" evidence="1">
    <location>
        <begin position="31"/>
        <end position="131"/>
    </location>
</feature>
<feature type="compositionally biased region" description="Low complexity" evidence="1">
    <location>
        <begin position="31"/>
        <end position="40"/>
    </location>
</feature>
<feature type="sequence conflict" description="In Ref. 3; AAH38738." evidence="2" ref="3">
    <original>E</original>
    <variation>G</variation>
    <location>
        <position position="69"/>
    </location>
</feature>
<gene>
    <name type="primary">LINC01465</name>
    <name type="synonym">C12orf61</name>
</gene>
<dbReference type="EMBL" id="AK098456">
    <property type="protein sequence ID" value="BAC05309.1"/>
    <property type="molecule type" value="mRNA"/>
</dbReference>
<dbReference type="EMBL" id="AC048341">
    <property type="status" value="NOT_ANNOTATED_CDS"/>
    <property type="molecule type" value="Genomic_DNA"/>
</dbReference>
<dbReference type="EMBL" id="CH471054">
    <property type="protein sequence ID" value="EAW97110.1"/>
    <property type="molecule type" value="Genomic_DNA"/>
</dbReference>
<dbReference type="EMBL" id="BC038738">
    <property type="protein sequence ID" value="AAH38738.1"/>
    <property type="molecule type" value="mRNA"/>
</dbReference>
<dbReference type="EMBL" id="BC136288">
    <property type="protein sequence ID" value="AAI36289.1"/>
    <property type="molecule type" value="mRNA"/>
</dbReference>
<dbReference type="BioGRID" id="129555">
    <property type="interactions" value="10"/>
</dbReference>
<dbReference type="BioMuta" id="HGNC:26364"/>
<dbReference type="MassIVE" id="Q8N7H1"/>
<dbReference type="AGR" id="HGNC:26364"/>
<dbReference type="GeneCards" id="LINC01465"/>
<dbReference type="HGNC" id="HGNC:26364">
    <property type="gene designation" value="LINC01465"/>
</dbReference>
<dbReference type="neXtProt" id="NX_Q8N7H1"/>
<dbReference type="InParanoid" id="Q8N7H1"/>
<dbReference type="PAN-GO" id="Q8N7H1">
    <property type="GO annotations" value="0 GO annotations based on evolutionary models"/>
</dbReference>
<dbReference type="PhylomeDB" id="Q8N7H1"/>
<dbReference type="PathwayCommons" id="Q8N7H1"/>
<dbReference type="Pharos" id="Q8N7H1">
    <property type="development level" value="Tdark"/>
</dbReference>
<dbReference type="PRO" id="PR:Q8N7H1"/>
<dbReference type="Proteomes" id="UP000005640">
    <property type="component" value="Unplaced"/>
</dbReference>
<dbReference type="RNAct" id="Q8N7H1">
    <property type="molecule type" value="protein"/>
</dbReference>
<name>CL061_HUMAN</name>